<gene>
    <name evidence="6" type="primary">ataF</name>
    <name type="ORF">ATEG_03471</name>
</gene>
<name>ATAF_ASPTN</name>
<protein>
    <recommendedName>
        <fullName evidence="6">Cytochrome P450 monooxygenase ataF</fullName>
        <ecNumber evidence="8">1.-.-.-</ecNumber>
    </recommendedName>
    <alternativeName>
        <fullName evidence="6">Acetylaranotin biosynthesis cluster protein F</fullName>
    </alternativeName>
</protein>
<feature type="chain" id="PRO_0000440660" description="Cytochrome P450 monooxygenase ataF">
    <location>
        <begin position="1"/>
        <end position="489"/>
    </location>
</feature>
<feature type="transmembrane region" description="Helical" evidence="2">
    <location>
        <begin position="12"/>
        <end position="32"/>
    </location>
</feature>
<feature type="binding site" description="axial binding residue" evidence="1">
    <location>
        <position position="434"/>
    </location>
    <ligand>
        <name>heme</name>
        <dbReference type="ChEBI" id="CHEBI:30413"/>
    </ligand>
    <ligandPart>
        <name>Fe</name>
        <dbReference type="ChEBI" id="CHEBI:18248"/>
    </ligandPart>
</feature>
<feature type="glycosylation site" description="N-linked (GlcNAc...) asparagine" evidence="3">
    <location>
        <position position="289"/>
    </location>
</feature>
<proteinExistence type="inferred from homology"/>
<evidence type="ECO:0000250" key="1">
    <source>
        <dbReference type="UniProtKB" id="P04798"/>
    </source>
</evidence>
<evidence type="ECO:0000255" key="2"/>
<evidence type="ECO:0000255" key="3">
    <source>
        <dbReference type="PROSITE-ProRule" id="PRU00498"/>
    </source>
</evidence>
<evidence type="ECO:0000269" key="4">
    <source>
    </source>
</evidence>
<evidence type="ECO:0000269" key="5">
    <source>
    </source>
</evidence>
<evidence type="ECO:0000303" key="6">
    <source>
    </source>
</evidence>
<evidence type="ECO:0000305" key="7"/>
<evidence type="ECO:0000305" key="8">
    <source>
    </source>
</evidence>
<sequence>MSLASLDLNALWLEHSAVIATLFAFGTALFLVSRSQKQSLNLPRFEVTNDVLKTIEEAHAQYPDDPFILSMVGMELAILPRSGIDVIKTLPEDQVSIKRHHHDVFLGEYTYMGTKSPEFDEAMRYDLTRNTPTVLASFVAEVQYAVEDSFGRPDQWTAFQPRACMSKIASLMSGRAFVGLPLSRDNTWVDATVRYTQDVTRAWLVLRTIPWVLRPFVAPFLPQVRSLKNQRRMTEERLTPLLDPSNAKNRDEIPGGDMLRWFRQRYPQGPTPKQLARDQLLATFASIYNLSNALSYLLFDLATYPEHIEPLRQELQEVLKGEPVNKENIQKLKKLDSFIRESQRLSPPSLANMPRIVTNPRGLKLPSGHTIPCGMRIMVRAHTLNLDPNLWPNPTRFDGFRFSKLREIPGNTFKYQHATTGTDNINFGHGLWACPGRHFASSQMKVVLAHLLLNYDIKLPNRMEKPQQQHFGLAIVPDTEQMVLLKIRG</sequence>
<dbReference type="EC" id="1.-.-.-" evidence="8"/>
<dbReference type="EMBL" id="CH476597">
    <property type="protein sequence ID" value="EAU36745.1"/>
    <property type="molecule type" value="Genomic_DNA"/>
</dbReference>
<dbReference type="RefSeq" id="XP_001212649.1">
    <property type="nucleotide sequence ID" value="XM_001212649.1"/>
</dbReference>
<dbReference type="SMR" id="Q0CS63"/>
<dbReference type="STRING" id="341663.Q0CS63"/>
<dbReference type="GlyCosmos" id="Q0CS63">
    <property type="glycosylation" value="1 site, No reported glycans"/>
</dbReference>
<dbReference type="EnsemblFungi" id="EAU36745">
    <property type="protein sequence ID" value="EAU36745"/>
    <property type="gene ID" value="ATEG_03471"/>
</dbReference>
<dbReference type="GeneID" id="4318084"/>
<dbReference type="VEuPathDB" id="FungiDB:ATEG_03471"/>
<dbReference type="eggNOG" id="KOG0157">
    <property type="taxonomic scope" value="Eukaryota"/>
</dbReference>
<dbReference type="HOGENOM" id="CLU_022195_0_2_1"/>
<dbReference type="OMA" id="EYSYMGT"/>
<dbReference type="OrthoDB" id="1844152at2759"/>
<dbReference type="Proteomes" id="UP000007963">
    <property type="component" value="Unassembled WGS sequence"/>
</dbReference>
<dbReference type="GO" id="GO:0016020">
    <property type="term" value="C:membrane"/>
    <property type="evidence" value="ECO:0007669"/>
    <property type="project" value="UniProtKB-SubCell"/>
</dbReference>
<dbReference type="GO" id="GO:0020037">
    <property type="term" value="F:heme binding"/>
    <property type="evidence" value="ECO:0007669"/>
    <property type="project" value="InterPro"/>
</dbReference>
<dbReference type="GO" id="GO:0005506">
    <property type="term" value="F:iron ion binding"/>
    <property type="evidence" value="ECO:0007669"/>
    <property type="project" value="InterPro"/>
</dbReference>
<dbReference type="GO" id="GO:0004497">
    <property type="term" value="F:monooxygenase activity"/>
    <property type="evidence" value="ECO:0007669"/>
    <property type="project" value="UniProtKB-KW"/>
</dbReference>
<dbReference type="GO" id="GO:0016705">
    <property type="term" value="F:oxidoreductase activity, acting on paired donors, with incorporation or reduction of molecular oxygen"/>
    <property type="evidence" value="ECO:0007669"/>
    <property type="project" value="InterPro"/>
</dbReference>
<dbReference type="GO" id="GO:0019748">
    <property type="term" value="P:secondary metabolic process"/>
    <property type="evidence" value="ECO:0007669"/>
    <property type="project" value="UniProtKB-ARBA"/>
</dbReference>
<dbReference type="CDD" id="cd11041">
    <property type="entry name" value="CYP503A1-like"/>
    <property type="match status" value="1"/>
</dbReference>
<dbReference type="Gene3D" id="1.10.630.10">
    <property type="entry name" value="Cytochrome P450"/>
    <property type="match status" value="1"/>
</dbReference>
<dbReference type="InterPro" id="IPR001128">
    <property type="entry name" value="Cyt_P450"/>
</dbReference>
<dbReference type="InterPro" id="IPR002403">
    <property type="entry name" value="Cyt_P450_E_grp-IV"/>
</dbReference>
<dbReference type="InterPro" id="IPR036396">
    <property type="entry name" value="Cyt_P450_sf"/>
</dbReference>
<dbReference type="PANTHER" id="PTHR46206">
    <property type="entry name" value="CYTOCHROME P450"/>
    <property type="match status" value="1"/>
</dbReference>
<dbReference type="PANTHER" id="PTHR46206:SF6">
    <property type="entry name" value="CYTOCHROME P450 MONOOXYGENASE AN1598-RELATED"/>
    <property type="match status" value="1"/>
</dbReference>
<dbReference type="Pfam" id="PF00067">
    <property type="entry name" value="p450"/>
    <property type="match status" value="1"/>
</dbReference>
<dbReference type="PRINTS" id="PR00465">
    <property type="entry name" value="EP450IV"/>
</dbReference>
<dbReference type="SUPFAM" id="SSF48264">
    <property type="entry name" value="Cytochrome P450"/>
    <property type="match status" value="1"/>
</dbReference>
<organism>
    <name type="scientific">Aspergillus terreus (strain NIH 2624 / FGSC A1156)</name>
    <dbReference type="NCBI Taxonomy" id="341663"/>
    <lineage>
        <taxon>Eukaryota</taxon>
        <taxon>Fungi</taxon>
        <taxon>Dikarya</taxon>
        <taxon>Ascomycota</taxon>
        <taxon>Pezizomycotina</taxon>
        <taxon>Eurotiomycetes</taxon>
        <taxon>Eurotiomycetidae</taxon>
        <taxon>Eurotiales</taxon>
        <taxon>Aspergillaceae</taxon>
        <taxon>Aspergillus</taxon>
        <taxon>Aspergillus subgen. Circumdati</taxon>
    </lineage>
</organism>
<keyword id="KW-0325">Glycoprotein</keyword>
<keyword id="KW-0408">Iron</keyword>
<keyword id="KW-0472">Membrane</keyword>
<keyword id="KW-0479">Metal-binding</keyword>
<keyword id="KW-0503">Monooxygenase</keyword>
<keyword id="KW-0560">Oxidoreductase</keyword>
<keyword id="KW-1185">Reference proteome</keyword>
<keyword id="KW-0812">Transmembrane</keyword>
<keyword id="KW-1133">Transmembrane helix</keyword>
<accession>Q0CS63</accession>
<reference key="1">
    <citation type="submission" date="2005-09" db="EMBL/GenBank/DDBJ databases">
        <title>Annotation of the Aspergillus terreus NIH2624 genome.</title>
        <authorList>
            <person name="Birren B.W."/>
            <person name="Lander E.S."/>
            <person name="Galagan J.E."/>
            <person name="Nusbaum C."/>
            <person name="Devon K."/>
            <person name="Henn M."/>
            <person name="Ma L.-J."/>
            <person name="Jaffe D.B."/>
            <person name="Butler J."/>
            <person name="Alvarez P."/>
            <person name="Gnerre S."/>
            <person name="Grabherr M."/>
            <person name="Kleber M."/>
            <person name="Mauceli E.W."/>
            <person name="Brockman W."/>
            <person name="Rounsley S."/>
            <person name="Young S.K."/>
            <person name="LaButti K."/>
            <person name="Pushparaj V."/>
            <person name="DeCaprio D."/>
            <person name="Crawford M."/>
            <person name="Koehrsen M."/>
            <person name="Engels R."/>
            <person name="Montgomery P."/>
            <person name="Pearson M."/>
            <person name="Howarth C."/>
            <person name="Larson L."/>
            <person name="Luoma S."/>
            <person name="White J."/>
            <person name="Alvarado L."/>
            <person name="Kodira C.D."/>
            <person name="Zeng Q."/>
            <person name="Oleary S."/>
            <person name="Yandava C."/>
            <person name="Denning D.W."/>
            <person name="Nierman W.C."/>
            <person name="Milne T."/>
            <person name="Madden K."/>
        </authorList>
    </citation>
    <scope>NUCLEOTIDE SEQUENCE [LARGE SCALE GENOMIC DNA]</scope>
    <source>
        <strain>NIH 2624 / FGSC A1156</strain>
    </source>
</reference>
<reference key="2">
    <citation type="journal article" date="2013" name="J. Am. Chem. Soc.">
        <title>Biosynthetic pathway for the epipolythiodioxopiperazine acetylaranotin in Aspergillus terreus revealed by genome-based deletion analysis.</title>
        <authorList>
            <person name="Guo C.J."/>
            <person name="Yeh H.H."/>
            <person name="Chiang Y.M."/>
            <person name="Sanchez J.F."/>
            <person name="Chang S.L."/>
            <person name="Bruno K.S."/>
            <person name="Wang C.C."/>
        </authorList>
    </citation>
    <scope>FUNCTION</scope>
    <scope>DISRUPTION PHENOTYPE</scope>
    <scope>PATHWAY</scope>
</reference>
<reference key="3">
    <citation type="journal article" date="2018" name="Fungal Genet. Biol.">
        <title>Genome-based deletion analysis in Aspergillus terreus reveals the acetylaranotin bis-thiomethyltransferase gene.</title>
        <authorList>
            <person name="Sun W.W."/>
            <person name="Romsdahl J."/>
            <person name="Guo C.J."/>
            <person name="Wang C.C.C."/>
        </authorList>
    </citation>
    <scope>FUNCTION</scope>
</reference>
<comment type="function">
    <text evidence="4 5">Cytochrome P450 monooxygenase; part of the gene cluster that mediates the biosynthesis of acetylaranotin, a member of the epipolythiodioxopiperazine (ETP) class of toxins characterized by a disulfide-bridged cyclic dipeptide (PubMed:23586797). The first step of acetylaranotin biosynthesis is performed by the NRPS ataP which produces diketopiperazine cyclo-L-Phe-L-Phe via the condensation of 2 phenylalanines (L-Phe) (PubMed:23586797). The ataC domain of ataTC then catalyzes the formation of bishydroxylation of cyclo-L-Phe-L-Phe (PubMed:23586797). The glutathione S-transferase domain ataG in ataIMG further catalyzes the conjugation of two glutathiones to the bishydroxylated intermediate (PubMed:23586797). Next, the dipeptidase ataJ removes the Glu residues (PubMed:23586797). The following step is performed by the carbon sulfur lyase domain ataI of ataIMG which may convert the bis-cysteinyl adduct to yield an epidithiol intermediate (PubMed:23586797). The ataT domain from ataTC then catalyzes the oxidation of the free dithiols, followed by a cyclization step catalyzed by the cytochrome P450 ataF (PubMed:23586797). AtaF probably acts as an epoxidase to promote a dual epoxidation formation at C8 and C9 along with C8' and C9', followed by the spontaneous nucleophilic attack of the amide nitrogens N10 and N10' to yield an intermediate with the pyrrolidine partial structure (PubMed:23586797). The final steps of acetylaranotin biosynthesis involve the acetylation and ring rearrangement of an epitetrathiodiketopiperazine intermediate to produce acetylaranotin (PubMed:23586797). AtaH probably catalyzes the acetylation of epitetrathiodiketopiperazine to produce a diacetate and ataY is responsible for the formation of the dihydrooxepin moiety that converts the diacetate intermediate to acetylaranotin via acetylapoaranotin (PubMed:23586797). Both enzymes could function independently in the absence of the other (PubMed:23586797). The acetylaranotin bis-thiomethyltransferase ataS located outside of acetylaranotin gene cluster is the main thiomethyltransferase responsible for converting acetylaranotin and its related intermediates to their methylated forms (PubMed:30096370).</text>
</comment>
<comment type="cofactor">
    <cofactor evidence="1">
        <name>heme</name>
        <dbReference type="ChEBI" id="CHEBI:30413"/>
    </cofactor>
</comment>
<comment type="pathway">
    <text evidence="4">Mycotoxin biosynthesis.</text>
</comment>
<comment type="subcellular location">
    <subcellularLocation>
        <location evidence="2">Membrane</location>
        <topology evidence="2">Single-pass membrane protein</topology>
    </subcellularLocation>
</comment>
<comment type="disruption phenotype">
    <text evidence="4">Impairs the production of acetylaranotin and accumulates chemically stable intermediates or shunt products such as cyclo-L-Phe-L-Phe, prearanotin A, 2-hydroxy-2'-ene-cyclo-L-Phe-L-Phe, 2-methoxy-2'-ene-cyclo-L-Phe-L-Phe, emethacin A and 2-imino-10'-hydroxy-cyclo-L-Phe-L-Phe (PubMed:23586797).</text>
</comment>
<comment type="similarity">
    <text evidence="7">Belongs to the cytochrome P450 family.</text>
</comment>